<sequence>MAAAQEADGAGSAVVAAGGGSSGQVTSNGSVGRDPPAETQPQNPPPQPAPNAWQVIKGVLFRIFIIWAISSWFRRGPAPQDQAGPGGAPRVASRNLFPKDTLMNLHVYISEHEHFTDFNATSALFWEQQDLVYGDWTSGENSDGCYEHFAELDIPQSVQQNGSIYIHVYFTKSGFHPDPRQKALYRRLATVHMSRMINKYKRRRFQKTKNLLTGETEADPEMIKRAEDYGPVEVISHWHPNITINIVDDHTPWVKGSVPPPLDQYVKFDAVSGDYYPIIYFNDYWNLQKDYYPINESLASLPLRVSFCPLSLWRWQLYAAQSAKSPWNFLGDELYEQSDEEQDSVKVALLETNPYLLALTIIVSIVHSVFEFLAFKNDIQFWNSRQSLEGLSVRSVFFGVFQSFVVLLYILDNETNFVVQVSVFIGVLIDLWKITKVMDVRLDREHKVAGLLPRPTFQDKSTYVESSTKVYDDMAFRYLSWILFPLLGCYAVYSLLYLEHKGWYSWVLSMLYGFLLTFGFITMTPQLFINYKLKSVAHLPWRMLTYKALNTFIDDLFAFVIKMPVMYRIGCLRDDVVFFIYLYQRWIYRVDPTRVNEFGMSGEAPTAAAPVAEAPPAAGALSSAPSPTTTTEAAREEASTPPPSQAPQGPSSASEPQEAPPKPAEDKKRD</sequence>
<keyword id="KW-0007">Acetylation</keyword>
<keyword id="KW-0217">Developmental protein</keyword>
<keyword id="KW-0221">Differentiation</keyword>
<keyword id="KW-0325">Glycoprotein</keyword>
<keyword id="KW-0472">Membrane</keyword>
<keyword id="KW-0597">Phosphoprotein</keyword>
<keyword id="KW-1185">Reference proteome</keyword>
<keyword id="KW-0812">Transmembrane</keyword>
<keyword id="KW-1133">Transmembrane helix</keyword>
<comment type="function">
    <text evidence="1 2 3">Involved in GABAergic but not glutamatergic transmission. Binds and traps GABAA receptors in the endoplasmic reticulum (ER). Modulates postsynaptic GABAergic transmission, and therefore inhibitory neurotransmission, by reducing the plasma membrane expression of these receptors. Altered GABAergic signaling is one among many causes of cleft palate (By similarity). Might function as a lipid scramblase, translocating lipids in membranes from one leaflet to the other one (By similarity). Required for efficient glycosylphosphatidylinositol (GPI) inositol deacylation in the ER, which is a crucial step to switch GPI-anchored proteins (GPI-APs) from protein folding to transport states (By similarity). May play a role in T-cell development (By similarity).</text>
</comment>
<comment type="subcellular location">
    <subcellularLocation>
        <location evidence="6">Membrane</location>
        <topology evidence="4">Multi-pass membrane protein</topology>
    </subcellularLocation>
</comment>
<comment type="similarity">
    <text evidence="6">Belongs to the CLPTM1 family.</text>
</comment>
<organism>
    <name type="scientific">Bos taurus</name>
    <name type="common">Bovine</name>
    <dbReference type="NCBI Taxonomy" id="9913"/>
    <lineage>
        <taxon>Eukaryota</taxon>
        <taxon>Metazoa</taxon>
        <taxon>Chordata</taxon>
        <taxon>Craniata</taxon>
        <taxon>Vertebrata</taxon>
        <taxon>Euteleostomi</taxon>
        <taxon>Mammalia</taxon>
        <taxon>Eutheria</taxon>
        <taxon>Laurasiatheria</taxon>
        <taxon>Artiodactyla</taxon>
        <taxon>Ruminantia</taxon>
        <taxon>Pecora</taxon>
        <taxon>Bovidae</taxon>
        <taxon>Bovinae</taxon>
        <taxon>Bos</taxon>
    </lineage>
</organism>
<name>CLPT1_BOVIN</name>
<feature type="initiator methionine" description="Removed" evidence="1">
    <location>
        <position position="1"/>
    </location>
</feature>
<feature type="chain" id="PRO_0000245095" description="Putative lipid scramblase CLPTM1">
    <location>
        <begin position="2"/>
        <end position="670"/>
    </location>
</feature>
<feature type="topological domain" description="Extracellular" evidence="4">
    <location>
        <begin position="2"/>
        <end position="354"/>
    </location>
</feature>
<feature type="transmembrane region" description="Helical" evidence="4">
    <location>
        <begin position="355"/>
        <end position="375"/>
    </location>
</feature>
<feature type="topological domain" description="Cytoplasmic" evidence="4">
    <location>
        <begin position="376"/>
        <end position="390"/>
    </location>
</feature>
<feature type="transmembrane region" description="Helical" evidence="4">
    <location>
        <begin position="391"/>
        <end position="411"/>
    </location>
</feature>
<feature type="topological domain" description="Extracellular" evidence="4">
    <location>
        <begin position="412"/>
        <end position="416"/>
    </location>
</feature>
<feature type="transmembrane region" description="Helical" evidence="4">
    <location>
        <begin position="417"/>
        <end position="437"/>
    </location>
</feature>
<feature type="topological domain" description="Cytoplasmic" evidence="4">
    <location>
        <begin position="438"/>
        <end position="477"/>
    </location>
</feature>
<feature type="transmembrane region" description="Helical" evidence="4">
    <location>
        <begin position="478"/>
        <end position="498"/>
    </location>
</feature>
<feature type="topological domain" description="Extracellular" evidence="4">
    <location>
        <begin position="499"/>
        <end position="502"/>
    </location>
</feature>
<feature type="transmembrane region" description="Helical" evidence="4">
    <location>
        <begin position="503"/>
        <end position="523"/>
    </location>
</feature>
<feature type="topological domain" description="Cytoplasmic" evidence="4">
    <location>
        <begin position="524"/>
        <end position="670"/>
    </location>
</feature>
<feature type="region of interest" description="Disordered" evidence="5">
    <location>
        <begin position="1"/>
        <end position="51"/>
    </location>
</feature>
<feature type="region of interest" description="Disordered" evidence="5">
    <location>
        <begin position="609"/>
        <end position="670"/>
    </location>
</feature>
<feature type="compositionally biased region" description="Low complexity" evidence="5">
    <location>
        <begin position="1"/>
        <end position="16"/>
    </location>
</feature>
<feature type="compositionally biased region" description="Low complexity" evidence="5">
    <location>
        <begin position="609"/>
        <end position="632"/>
    </location>
</feature>
<feature type="compositionally biased region" description="Low complexity" evidence="5">
    <location>
        <begin position="646"/>
        <end position="657"/>
    </location>
</feature>
<feature type="modified residue" description="N-acetylalanine" evidence="1">
    <location>
        <position position="2"/>
    </location>
</feature>
<feature type="modified residue" description="Phosphoserine" evidence="1">
    <location>
        <position position="601"/>
    </location>
</feature>
<feature type="glycosylation site" description="N-linked (GlcNAc...) asparagine" evidence="4">
    <location>
        <position position="28"/>
    </location>
</feature>
<feature type="glycosylation site" description="N-linked (GlcNAc...) asparagine" evidence="4">
    <location>
        <position position="119"/>
    </location>
</feature>
<feature type="glycosylation site" description="N-linked (GlcNAc...) asparagine" evidence="4">
    <location>
        <position position="161"/>
    </location>
</feature>
<feature type="glycosylation site" description="N-linked (GlcNAc...) asparagine" evidence="4">
    <location>
        <position position="241"/>
    </location>
</feature>
<feature type="glycosylation site" description="N-linked (GlcNAc...) asparagine" evidence="4">
    <location>
        <position position="295"/>
    </location>
</feature>
<feature type="glycosylation site" description="N-linked (GlcNAc...) asparagine" evidence="4">
    <location>
        <position position="413"/>
    </location>
</feature>
<reference key="1">
    <citation type="submission" date="2005-12" db="EMBL/GenBank/DDBJ databases">
        <authorList>
            <consortium name="NIH - Mammalian Gene Collection (MGC) project"/>
        </authorList>
    </citation>
    <scope>NUCLEOTIDE SEQUENCE [LARGE SCALE MRNA]</scope>
    <source>
        <strain>Crossbred X Angus</strain>
        <tissue>Liver</tissue>
    </source>
</reference>
<accession>Q2NL17</accession>
<dbReference type="EMBL" id="BC111212">
    <property type="protein sequence ID" value="AAI11213.1"/>
    <property type="molecule type" value="mRNA"/>
</dbReference>
<dbReference type="RefSeq" id="NP_001040078.1">
    <property type="nucleotide sequence ID" value="NM_001046613.1"/>
</dbReference>
<dbReference type="FunCoup" id="Q2NL17">
    <property type="interactions" value="3941"/>
</dbReference>
<dbReference type="STRING" id="9913.ENSBTAP00000027395"/>
<dbReference type="GlyCosmos" id="Q2NL17">
    <property type="glycosylation" value="6 sites, No reported glycans"/>
</dbReference>
<dbReference type="GlyGen" id="Q2NL17">
    <property type="glycosylation" value="6 sites"/>
</dbReference>
<dbReference type="PaxDb" id="9913-ENSBTAP00000027395"/>
<dbReference type="Ensembl" id="ENSBTAT00000027395.6">
    <property type="protein sequence ID" value="ENSBTAP00000027395.5"/>
    <property type="gene ID" value="ENSBTAG00000020560.6"/>
</dbReference>
<dbReference type="GeneID" id="618037"/>
<dbReference type="KEGG" id="bta:618037"/>
<dbReference type="CTD" id="1209"/>
<dbReference type="VEuPathDB" id="HostDB:ENSBTAG00000020560"/>
<dbReference type="VGNC" id="VGNC:27460">
    <property type="gene designation" value="CLPTM1"/>
</dbReference>
<dbReference type="eggNOG" id="KOG2489">
    <property type="taxonomic scope" value="Eukaryota"/>
</dbReference>
<dbReference type="GeneTree" id="ENSGT00530000063461"/>
<dbReference type="InParanoid" id="Q2NL17"/>
<dbReference type="OMA" id="TLWAHFY"/>
<dbReference type="OrthoDB" id="378564at2759"/>
<dbReference type="Proteomes" id="UP000009136">
    <property type="component" value="Chromosome 18"/>
</dbReference>
<dbReference type="Bgee" id="ENSBTAG00000020560">
    <property type="expression patterns" value="Expressed in pigment epithelium of eye and 103 other cell types or tissues"/>
</dbReference>
<dbReference type="GO" id="GO:0012505">
    <property type="term" value="C:endomembrane system"/>
    <property type="evidence" value="ECO:0000318"/>
    <property type="project" value="GO_Central"/>
</dbReference>
<dbReference type="GO" id="GO:0009897">
    <property type="term" value="C:external side of plasma membrane"/>
    <property type="evidence" value="ECO:0007669"/>
    <property type="project" value="Ensembl"/>
</dbReference>
<dbReference type="GO" id="GO:0016020">
    <property type="term" value="C:membrane"/>
    <property type="evidence" value="ECO:0000318"/>
    <property type="project" value="GO_Central"/>
</dbReference>
<dbReference type="GO" id="GO:0050811">
    <property type="term" value="F:GABA receptor binding"/>
    <property type="evidence" value="ECO:0007669"/>
    <property type="project" value="Ensembl"/>
</dbReference>
<dbReference type="GO" id="GO:0030154">
    <property type="term" value="P:cell differentiation"/>
    <property type="evidence" value="ECO:0007669"/>
    <property type="project" value="UniProtKB-KW"/>
</dbReference>
<dbReference type="GO" id="GO:0033081">
    <property type="term" value="P:regulation of T cell differentiation in thymus"/>
    <property type="evidence" value="ECO:0007669"/>
    <property type="project" value="Ensembl"/>
</dbReference>
<dbReference type="InterPro" id="IPR008429">
    <property type="entry name" value="CLPTM1"/>
</dbReference>
<dbReference type="PANTHER" id="PTHR21347">
    <property type="entry name" value="CLEFT LIP AND PALATE ASSOCIATED TRANSMEMBRANE PROTEIN-RELATED"/>
    <property type="match status" value="1"/>
</dbReference>
<dbReference type="PANTHER" id="PTHR21347:SF14">
    <property type="entry name" value="LIPID SCRAMBLASE CLPTM1-RELATED"/>
    <property type="match status" value="1"/>
</dbReference>
<dbReference type="Pfam" id="PF05602">
    <property type="entry name" value="CLPTM1"/>
    <property type="match status" value="1"/>
</dbReference>
<protein>
    <recommendedName>
        <fullName>Putative lipid scramblase CLPTM1</fullName>
    </recommendedName>
    <alternativeName>
        <fullName>Cleft lip and palate transmembrane protein 1 homolog</fullName>
    </alternativeName>
</protein>
<proteinExistence type="evidence at transcript level"/>
<gene>
    <name type="primary">CLPTM1</name>
</gene>
<evidence type="ECO:0000250" key="1">
    <source>
        <dbReference type="UniProtKB" id="O96005"/>
    </source>
</evidence>
<evidence type="ECO:0000250" key="2">
    <source>
        <dbReference type="UniProtKB" id="Q8VBZ3"/>
    </source>
</evidence>
<evidence type="ECO:0000250" key="3">
    <source>
        <dbReference type="UniProtKB" id="Q96KA5"/>
    </source>
</evidence>
<evidence type="ECO:0000255" key="4"/>
<evidence type="ECO:0000256" key="5">
    <source>
        <dbReference type="SAM" id="MobiDB-lite"/>
    </source>
</evidence>
<evidence type="ECO:0000305" key="6"/>